<evidence type="ECO:0000250" key="1">
    <source>
        <dbReference type="UniProtKB" id="O65695"/>
    </source>
</evidence>
<evidence type="ECO:0000269" key="2">
    <source>
    </source>
</evidence>
<evidence type="ECO:0000305" key="3"/>
<proteinExistence type="inferred from homology"/>
<accession>P0DKL1</accession>
<sequence length="103" mass="11758">MGLIRKSHKQTQALAIKKIIKKCSSFGKNNDDSGLPNDVPKGHFVVYVGERRNRYIVPISCLDHPTFQDLLQRSEEEFGFNHDMGIIIPCQEVDFLSFFSMIA</sequence>
<protein>
    <recommendedName>
        <fullName evidence="3">Auxin-responsive protein SAUR50</fullName>
    </recommendedName>
    <alternativeName>
        <fullName evidence="3">Protein SMALL AUXIN UP RNA 50</fullName>
    </alternativeName>
</protein>
<reference key="1">
    <citation type="journal article" date="2016" name="Science">
        <title>Circadian regulation of sunflower heliotropism, floral orientation, and pollinator visits.</title>
        <authorList>
            <person name="Atamian H.S."/>
            <person name="Creux N.M."/>
            <person name="Brown E.A."/>
            <person name="Garner A.G."/>
            <person name="Blackman B.K."/>
            <person name="Harmer S.L."/>
        </authorList>
    </citation>
    <scope>NUCLEOTIDE SEQUENCE [MRNA]</scope>
    <scope>FUNCTION</scope>
    <source>
        <strain>cv. HA412-HO</strain>
    </source>
</reference>
<keyword id="KW-0927">Auxin signaling pathway</keyword>
<keyword id="KW-0341">Growth regulation</keyword>
<comment type="function">
    <text evidence="1 2">Effector of hormonal and environmental signals in plant growth (By similarity). Involved in heliotropism (PubMed:27493185).</text>
</comment>
<comment type="miscellaneous">
    <text evidence="2">SAUR50 is more highly expressed on the east side of solar tracking sunflower stems during the day, while an IAA19-like gene is more highly expressed on the west side at night.</text>
</comment>
<comment type="similarity">
    <text evidence="3">Belongs to the ARG7 family.</text>
</comment>
<organism>
    <name type="scientific">Helianthus annuus</name>
    <name type="common">Common sunflower</name>
    <dbReference type="NCBI Taxonomy" id="4232"/>
    <lineage>
        <taxon>Eukaryota</taxon>
        <taxon>Viridiplantae</taxon>
        <taxon>Streptophyta</taxon>
        <taxon>Embryophyta</taxon>
        <taxon>Tracheophyta</taxon>
        <taxon>Spermatophyta</taxon>
        <taxon>Magnoliopsida</taxon>
        <taxon>eudicotyledons</taxon>
        <taxon>Gunneridae</taxon>
        <taxon>Pentapetalae</taxon>
        <taxon>asterids</taxon>
        <taxon>campanulids</taxon>
        <taxon>Asterales</taxon>
        <taxon>Asteraceae</taxon>
        <taxon>Asteroideae</taxon>
        <taxon>Heliantheae alliance</taxon>
        <taxon>Heliantheae</taxon>
        <taxon>Helianthus</taxon>
    </lineage>
</organism>
<name>SAU50_HELAN</name>
<dbReference type="RefSeq" id="XP_022018211.1">
    <property type="nucleotide sequence ID" value="XM_022162519.2"/>
</dbReference>
<dbReference type="EnsemblPlants" id="mRNA:HanXRQr2_Chr16g0776431">
    <property type="protein sequence ID" value="CDS:HanXRQr2_Chr16g0776431.1"/>
    <property type="gene ID" value="HanXRQr2_Chr16g0776431"/>
</dbReference>
<dbReference type="GeneID" id="110918162"/>
<dbReference type="Gramene" id="mRNA:HanXRQr2_Chr16g0776431">
    <property type="protein sequence ID" value="CDS:HanXRQr2_Chr16g0776431.1"/>
    <property type="gene ID" value="HanXRQr2_Chr16g0776431"/>
</dbReference>
<dbReference type="OMA" id="PIFWLTH"/>
<dbReference type="OrthoDB" id="1841988at2759"/>
<dbReference type="PhylomeDB" id="P0DKL1"/>
<dbReference type="GO" id="GO:0009734">
    <property type="term" value="P:auxin-activated signaling pathway"/>
    <property type="evidence" value="ECO:0007669"/>
    <property type="project" value="UniProtKB-KW"/>
</dbReference>
<dbReference type="InterPro" id="IPR003676">
    <property type="entry name" value="SAUR_fam"/>
</dbReference>
<dbReference type="PANTHER" id="PTHR31929">
    <property type="entry name" value="SAUR-LIKE AUXIN-RESPONSIVE PROTEIN FAMILY-RELATED"/>
    <property type="match status" value="1"/>
</dbReference>
<dbReference type="Pfam" id="PF02519">
    <property type="entry name" value="Auxin_inducible"/>
    <property type="match status" value="1"/>
</dbReference>
<feature type="chain" id="PRO_0000437982" description="Auxin-responsive protein SAUR50">
    <location>
        <begin position="1"/>
        <end position="103"/>
    </location>
</feature>